<organism>
    <name type="scientific">Psychrobacter sp. (strain PRwf-1)</name>
    <dbReference type="NCBI Taxonomy" id="349106"/>
    <lineage>
        <taxon>Bacteria</taxon>
        <taxon>Pseudomonadati</taxon>
        <taxon>Pseudomonadota</taxon>
        <taxon>Gammaproteobacteria</taxon>
        <taxon>Moraxellales</taxon>
        <taxon>Moraxellaceae</taxon>
        <taxon>Psychrobacter</taxon>
    </lineage>
</organism>
<protein>
    <recommendedName>
        <fullName evidence="1">Large ribosomal subunit protein bL36</fullName>
    </recommendedName>
    <alternativeName>
        <fullName evidence="2">50S ribosomal protein L36</fullName>
    </alternativeName>
</protein>
<dbReference type="EMBL" id="CP000713">
    <property type="protein sequence ID" value="ABQ94866.1"/>
    <property type="molecule type" value="Genomic_DNA"/>
</dbReference>
<dbReference type="SMR" id="A5WGS5"/>
<dbReference type="STRING" id="349106.PsycPRwf_1926"/>
<dbReference type="KEGG" id="prw:PsycPRwf_1926"/>
<dbReference type="eggNOG" id="COG0257">
    <property type="taxonomic scope" value="Bacteria"/>
</dbReference>
<dbReference type="HOGENOM" id="CLU_135723_3_1_6"/>
<dbReference type="GO" id="GO:1990904">
    <property type="term" value="C:ribonucleoprotein complex"/>
    <property type="evidence" value="ECO:0007669"/>
    <property type="project" value="UniProtKB-KW"/>
</dbReference>
<dbReference type="GO" id="GO:0005840">
    <property type="term" value="C:ribosome"/>
    <property type="evidence" value="ECO:0007669"/>
    <property type="project" value="UniProtKB-KW"/>
</dbReference>
<dbReference type="GO" id="GO:0003735">
    <property type="term" value="F:structural constituent of ribosome"/>
    <property type="evidence" value="ECO:0007669"/>
    <property type="project" value="InterPro"/>
</dbReference>
<dbReference type="GO" id="GO:0006412">
    <property type="term" value="P:translation"/>
    <property type="evidence" value="ECO:0007669"/>
    <property type="project" value="UniProtKB-UniRule"/>
</dbReference>
<dbReference type="HAMAP" id="MF_00251">
    <property type="entry name" value="Ribosomal_bL36"/>
    <property type="match status" value="1"/>
</dbReference>
<dbReference type="InterPro" id="IPR000473">
    <property type="entry name" value="Ribosomal_bL36"/>
</dbReference>
<dbReference type="InterPro" id="IPR035977">
    <property type="entry name" value="Ribosomal_bL36_sp"/>
</dbReference>
<dbReference type="InterPro" id="IPR047621">
    <property type="entry name" value="Ribosomal_L36_bact"/>
</dbReference>
<dbReference type="NCBIfam" id="NF002021">
    <property type="entry name" value="PRK00831.1"/>
    <property type="match status" value="1"/>
</dbReference>
<dbReference type="PANTHER" id="PTHR47781">
    <property type="entry name" value="50S RIBOSOMAL PROTEIN L36 2"/>
    <property type="match status" value="1"/>
</dbReference>
<dbReference type="PANTHER" id="PTHR47781:SF1">
    <property type="entry name" value="LARGE RIBOSOMAL SUBUNIT PROTEIN BL36B"/>
    <property type="match status" value="1"/>
</dbReference>
<dbReference type="Pfam" id="PF00444">
    <property type="entry name" value="Ribosomal_L36"/>
    <property type="match status" value="1"/>
</dbReference>
<dbReference type="SUPFAM" id="SSF57840">
    <property type="entry name" value="Ribosomal protein L36"/>
    <property type="match status" value="1"/>
</dbReference>
<dbReference type="PROSITE" id="PS00828">
    <property type="entry name" value="RIBOSOMAL_L36"/>
    <property type="match status" value="1"/>
</dbReference>
<comment type="similarity">
    <text evidence="1">Belongs to the bacterial ribosomal protein bL36 family.</text>
</comment>
<reference key="1">
    <citation type="submission" date="2007-05" db="EMBL/GenBank/DDBJ databases">
        <title>Complete sequence of chromosome of Psychrobacter sp. PRwf-1.</title>
        <authorList>
            <consortium name="US DOE Joint Genome Institute"/>
            <person name="Copeland A."/>
            <person name="Lucas S."/>
            <person name="Lapidus A."/>
            <person name="Barry K."/>
            <person name="Detter J.C."/>
            <person name="Glavina del Rio T."/>
            <person name="Hammon N."/>
            <person name="Israni S."/>
            <person name="Dalin E."/>
            <person name="Tice H."/>
            <person name="Pitluck S."/>
            <person name="Chain P."/>
            <person name="Malfatti S."/>
            <person name="Shin M."/>
            <person name="Vergez L."/>
            <person name="Schmutz J."/>
            <person name="Larimer F."/>
            <person name="Land M."/>
            <person name="Hauser L."/>
            <person name="Kyrpides N."/>
            <person name="Kim E."/>
            <person name="Tiedje J."/>
            <person name="Richardson P."/>
        </authorList>
    </citation>
    <scope>NUCLEOTIDE SEQUENCE [LARGE SCALE GENOMIC DNA]</scope>
    <source>
        <strain>PRwf-1</strain>
    </source>
</reference>
<feature type="chain" id="PRO_1000071864" description="Large ribosomal subunit protein bL36">
    <location>
        <begin position="1"/>
        <end position="45"/>
    </location>
</feature>
<gene>
    <name evidence="1" type="primary">rpmJ</name>
    <name type="ordered locus">PsycPRwf_1926</name>
</gene>
<accession>A5WGS5</accession>
<sequence>MQVLSSLKSAKNRHPDCQVVRRRGRVFVINKTDGRFKAVQGKKKK</sequence>
<evidence type="ECO:0000255" key="1">
    <source>
        <dbReference type="HAMAP-Rule" id="MF_00251"/>
    </source>
</evidence>
<evidence type="ECO:0000305" key="2"/>
<keyword id="KW-0687">Ribonucleoprotein</keyword>
<keyword id="KW-0689">Ribosomal protein</keyword>
<name>RL36_PSYWF</name>
<proteinExistence type="inferred from homology"/>